<organism>
    <name type="scientific">Homo sapiens</name>
    <name type="common">Human</name>
    <dbReference type="NCBI Taxonomy" id="9606"/>
    <lineage>
        <taxon>Eukaryota</taxon>
        <taxon>Metazoa</taxon>
        <taxon>Chordata</taxon>
        <taxon>Craniata</taxon>
        <taxon>Vertebrata</taxon>
        <taxon>Euteleostomi</taxon>
        <taxon>Mammalia</taxon>
        <taxon>Eutheria</taxon>
        <taxon>Euarchontoglires</taxon>
        <taxon>Primates</taxon>
        <taxon>Haplorrhini</taxon>
        <taxon>Catarrhini</taxon>
        <taxon>Hominidae</taxon>
        <taxon>Homo</taxon>
    </lineage>
</organism>
<evidence type="ECO:0000250" key="1"/>
<evidence type="ECO:0000250" key="2">
    <source>
        <dbReference type="UniProtKB" id="P62937"/>
    </source>
</evidence>
<evidence type="ECO:0000255" key="3">
    <source>
        <dbReference type="PROSITE-ProRule" id="PRU00156"/>
    </source>
</evidence>
<evidence type="ECO:0000305" key="4"/>
<evidence type="ECO:0000312" key="5">
    <source>
        <dbReference type="HGNC" id="HGNC:33998"/>
    </source>
</evidence>
<comment type="function">
    <text evidence="1">PPIases accelerate the folding of proteins. It catalyzes the cis-trans isomerization of proline imidic peptide bonds in oligopeptides (By similarity).</text>
</comment>
<comment type="catalytic activity">
    <reaction>
        <text>[protein]-peptidylproline (omega=180) = [protein]-peptidylproline (omega=0)</text>
        <dbReference type="Rhea" id="RHEA:16237"/>
        <dbReference type="Rhea" id="RHEA-COMP:10747"/>
        <dbReference type="Rhea" id="RHEA-COMP:10748"/>
        <dbReference type="ChEBI" id="CHEBI:83833"/>
        <dbReference type="ChEBI" id="CHEBI:83834"/>
        <dbReference type="EC" id="5.2.1.8"/>
    </reaction>
</comment>
<comment type="subcellular location">
    <subcellularLocation>
        <location evidence="2">Cytoplasm</location>
    </subcellularLocation>
</comment>
<comment type="miscellaneous">
    <text evidence="4">It is one of six related genes or pseudogenes found in a cluster, thought to result from gene duplication, on chromosome 1.</text>
</comment>
<comment type="similarity">
    <text evidence="4">Belongs to the cyclophilin-type PPIase family. PPIase A subfamily.</text>
</comment>
<proteinExistence type="inferred from homology"/>
<dbReference type="EC" id="5.2.1.8"/>
<dbReference type="EMBL" id="BX283067">
    <property type="status" value="NOT_ANNOTATED_CDS"/>
    <property type="molecule type" value="Genomic_DNA"/>
</dbReference>
<dbReference type="CCDS" id="CCDS59199.1"/>
<dbReference type="RefSeq" id="NP_001157733.1">
    <property type="nucleotide sequence ID" value="NM_001164261.2"/>
</dbReference>
<dbReference type="SMR" id="F5H284"/>
<dbReference type="BioGRID" id="570187">
    <property type="interactions" value="1"/>
</dbReference>
<dbReference type="FunCoup" id="F5H284">
    <property type="interactions" value="58"/>
</dbReference>
<dbReference type="IntAct" id="F5H284">
    <property type="interactions" value="1"/>
</dbReference>
<dbReference type="STRING" id="9606.ENSP00000439444"/>
<dbReference type="iPTMnet" id="F5H284"/>
<dbReference type="PhosphoSitePlus" id="F5H284"/>
<dbReference type="BioMuta" id="PPIAL4D"/>
<dbReference type="jPOST" id="F5H284"/>
<dbReference type="MassIVE" id="F5H284"/>
<dbReference type="PaxDb" id="9606-ENSP00000439444"/>
<dbReference type="ProteomicsDB" id="25892"/>
<dbReference type="DNASU" id="645142"/>
<dbReference type="Ensembl" id="ENST00000544708.3">
    <property type="protein sequence ID" value="ENSP00000439444.1"/>
    <property type="gene ID" value="ENSG00000289549.1"/>
</dbReference>
<dbReference type="GeneID" id="645142"/>
<dbReference type="KEGG" id="hsa:645142"/>
<dbReference type="MANE-Select" id="ENST00000544708.3">
    <property type="protein sequence ID" value="ENSP00000439444.1"/>
    <property type="RefSeq nucleotide sequence ID" value="NM_001164261.2"/>
    <property type="RefSeq protein sequence ID" value="NP_001157733.1"/>
</dbReference>
<dbReference type="UCSC" id="uc031usm.2">
    <property type="organism name" value="human"/>
</dbReference>
<dbReference type="AGR" id="HGNC:33998"/>
<dbReference type="CTD" id="645142"/>
<dbReference type="GeneCards" id="PPIAL4D"/>
<dbReference type="HGNC" id="HGNC:33998">
    <property type="gene designation" value="PPIAL4D"/>
</dbReference>
<dbReference type="HPA" id="ENSG00000289549">
    <property type="expression patterns" value="Not detected"/>
</dbReference>
<dbReference type="neXtProt" id="NX_F5H284"/>
<dbReference type="VEuPathDB" id="HostDB:ENSG00000256374"/>
<dbReference type="eggNOG" id="KOG0865">
    <property type="taxonomic scope" value="Eukaryota"/>
</dbReference>
<dbReference type="GeneTree" id="ENSGT00950000183087"/>
<dbReference type="HOGENOM" id="CLU_012062_4_3_1"/>
<dbReference type="InParanoid" id="F5H284"/>
<dbReference type="OrthoDB" id="9458476at2759"/>
<dbReference type="PAN-GO" id="F5H284">
    <property type="GO annotations" value="6 GO annotations based on evolutionary models"/>
</dbReference>
<dbReference type="PhylomeDB" id="F5H284"/>
<dbReference type="TreeFam" id="TF316719"/>
<dbReference type="PathwayCommons" id="F5H284"/>
<dbReference type="SignaLink" id="F5H284"/>
<dbReference type="BioGRID-ORCS" id="645142">
    <property type="hits" value="97 hits in 685 CRISPR screens"/>
</dbReference>
<dbReference type="CD-CODE" id="91857CE7">
    <property type="entry name" value="Nucleolus"/>
</dbReference>
<dbReference type="ChiTaRS" id="PPIAL4D">
    <property type="organism name" value="human"/>
</dbReference>
<dbReference type="GenomeRNAi" id="645142"/>
<dbReference type="Pharos" id="F5H284">
    <property type="development level" value="Tdark"/>
</dbReference>
<dbReference type="PRO" id="PR:F5H284"/>
<dbReference type="Proteomes" id="UP000005640">
    <property type="component" value="Chromosome 1"/>
</dbReference>
<dbReference type="RNAct" id="F5H284">
    <property type="molecule type" value="protein"/>
</dbReference>
<dbReference type="Bgee" id="ENSG00000256374">
    <property type="expression patterns" value="Expressed in male germ line stem cell (sensu Vertebrata) in testis and 52 other cell types or tissues"/>
</dbReference>
<dbReference type="GO" id="GO:0005737">
    <property type="term" value="C:cytoplasm"/>
    <property type="evidence" value="ECO:0000318"/>
    <property type="project" value="GO_Central"/>
</dbReference>
<dbReference type="GO" id="GO:0016018">
    <property type="term" value="F:cyclosporin A binding"/>
    <property type="evidence" value="ECO:0000318"/>
    <property type="project" value="GO_Central"/>
</dbReference>
<dbReference type="GO" id="GO:0003755">
    <property type="term" value="F:peptidyl-prolyl cis-trans isomerase activity"/>
    <property type="evidence" value="ECO:0000318"/>
    <property type="project" value="GO_Central"/>
</dbReference>
<dbReference type="GO" id="GO:0006457">
    <property type="term" value="P:protein folding"/>
    <property type="evidence" value="ECO:0000318"/>
    <property type="project" value="GO_Central"/>
</dbReference>
<dbReference type="FunFam" id="2.40.100.10:FF:000011">
    <property type="entry name" value="Peptidyl-prolyl cis-trans isomerase A"/>
    <property type="match status" value="1"/>
</dbReference>
<dbReference type="Gene3D" id="2.40.100.10">
    <property type="entry name" value="Cyclophilin-like"/>
    <property type="match status" value="1"/>
</dbReference>
<dbReference type="InterPro" id="IPR029000">
    <property type="entry name" value="Cyclophilin-like_dom_sf"/>
</dbReference>
<dbReference type="InterPro" id="IPR024936">
    <property type="entry name" value="Cyclophilin-type_PPIase"/>
</dbReference>
<dbReference type="InterPro" id="IPR020892">
    <property type="entry name" value="Cyclophilin-type_PPIase_CS"/>
</dbReference>
<dbReference type="InterPro" id="IPR002130">
    <property type="entry name" value="Cyclophilin-type_PPIase_dom"/>
</dbReference>
<dbReference type="PANTHER" id="PTHR11071">
    <property type="entry name" value="PEPTIDYL-PROLYL CIS-TRANS ISOMERASE"/>
    <property type="match status" value="1"/>
</dbReference>
<dbReference type="PANTHER" id="PTHR11071:SF466">
    <property type="entry name" value="PEPTIDYL-PROLYL CIS-TRANS ISOMERASE A-LIKE 4C-RELATED"/>
    <property type="match status" value="1"/>
</dbReference>
<dbReference type="Pfam" id="PF00160">
    <property type="entry name" value="Pro_isomerase"/>
    <property type="match status" value="1"/>
</dbReference>
<dbReference type="PIRSF" id="PIRSF001467">
    <property type="entry name" value="Peptidylpro_ismrse"/>
    <property type="match status" value="1"/>
</dbReference>
<dbReference type="PRINTS" id="PR00153">
    <property type="entry name" value="CSAPPISMRASE"/>
</dbReference>
<dbReference type="SUPFAM" id="SSF50891">
    <property type="entry name" value="Cyclophilin-like"/>
    <property type="match status" value="1"/>
</dbReference>
<dbReference type="PROSITE" id="PS00170">
    <property type="entry name" value="CSA_PPIASE_1"/>
    <property type="match status" value="1"/>
</dbReference>
<dbReference type="PROSITE" id="PS50072">
    <property type="entry name" value="CSA_PPIASE_2"/>
    <property type="match status" value="1"/>
</dbReference>
<gene>
    <name evidence="5" type="primary">PPIAL4D</name>
</gene>
<reference key="1">
    <citation type="journal article" date="2006" name="Nature">
        <title>The DNA sequence and biological annotation of human chromosome 1.</title>
        <authorList>
            <person name="Gregory S.G."/>
            <person name="Barlow K.F."/>
            <person name="McLay K.E."/>
            <person name="Kaul R."/>
            <person name="Swarbreck D."/>
            <person name="Dunham A."/>
            <person name="Scott C.E."/>
            <person name="Howe K.L."/>
            <person name="Woodfine K."/>
            <person name="Spencer C.C.A."/>
            <person name="Jones M.C."/>
            <person name="Gillson C."/>
            <person name="Searle S."/>
            <person name="Zhou Y."/>
            <person name="Kokocinski F."/>
            <person name="McDonald L."/>
            <person name="Evans R."/>
            <person name="Phillips K."/>
            <person name="Atkinson A."/>
            <person name="Cooper R."/>
            <person name="Jones C."/>
            <person name="Hall R.E."/>
            <person name="Andrews T.D."/>
            <person name="Lloyd C."/>
            <person name="Ainscough R."/>
            <person name="Almeida J.P."/>
            <person name="Ambrose K.D."/>
            <person name="Anderson F."/>
            <person name="Andrew R.W."/>
            <person name="Ashwell R.I.S."/>
            <person name="Aubin K."/>
            <person name="Babbage A.K."/>
            <person name="Bagguley C.L."/>
            <person name="Bailey J."/>
            <person name="Beasley H."/>
            <person name="Bethel G."/>
            <person name="Bird C.P."/>
            <person name="Bray-Allen S."/>
            <person name="Brown J.Y."/>
            <person name="Brown A.J."/>
            <person name="Buckley D."/>
            <person name="Burton J."/>
            <person name="Bye J."/>
            <person name="Carder C."/>
            <person name="Chapman J.C."/>
            <person name="Clark S.Y."/>
            <person name="Clarke G."/>
            <person name="Clee C."/>
            <person name="Cobley V."/>
            <person name="Collier R.E."/>
            <person name="Corby N."/>
            <person name="Coville G.J."/>
            <person name="Davies J."/>
            <person name="Deadman R."/>
            <person name="Dunn M."/>
            <person name="Earthrowl M."/>
            <person name="Ellington A.G."/>
            <person name="Errington H."/>
            <person name="Frankish A."/>
            <person name="Frankland J."/>
            <person name="French L."/>
            <person name="Garner P."/>
            <person name="Garnett J."/>
            <person name="Gay L."/>
            <person name="Ghori M.R.J."/>
            <person name="Gibson R."/>
            <person name="Gilby L.M."/>
            <person name="Gillett W."/>
            <person name="Glithero R.J."/>
            <person name="Grafham D.V."/>
            <person name="Griffiths C."/>
            <person name="Griffiths-Jones S."/>
            <person name="Grocock R."/>
            <person name="Hammond S."/>
            <person name="Harrison E.S.I."/>
            <person name="Hart E."/>
            <person name="Haugen E."/>
            <person name="Heath P.D."/>
            <person name="Holmes S."/>
            <person name="Holt K."/>
            <person name="Howden P.J."/>
            <person name="Hunt A.R."/>
            <person name="Hunt S.E."/>
            <person name="Hunter G."/>
            <person name="Isherwood J."/>
            <person name="James R."/>
            <person name="Johnson C."/>
            <person name="Johnson D."/>
            <person name="Joy A."/>
            <person name="Kay M."/>
            <person name="Kershaw J.K."/>
            <person name="Kibukawa M."/>
            <person name="Kimberley A.M."/>
            <person name="King A."/>
            <person name="Knights A.J."/>
            <person name="Lad H."/>
            <person name="Laird G."/>
            <person name="Lawlor S."/>
            <person name="Leongamornlert D.A."/>
            <person name="Lloyd D.M."/>
            <person name="Loveland J."/>
            <person name="Lovell J."/>
            <person name="Lush M.J."/>
            <person name="Lyne R."/>
            <person name="Martin S."/>
            <person name="Mashreghi-Mohammadi M."/>
            <person name="Matthews L."/>
            <person name="Matthews N.S.W."/>
            <person name="McLaren S."/>
            <person name="Milne S."/>
            <person name="Mistry S."/>
            <person name="Moore M.J.F."/>
            <person name="Nickerson T."/>
            <person name="O'Dell C.N."/>
            <person name="Oliver K."/>
            <person name="Palmeiri A."/>
            <person name="Palmer S.A."/>
            <person name="Parker A."/>
            <person name="Patel D."/>
            <person name="Pearce A.V."/>
            <person name="Peck A.I."/>
            <person name="Pelan S."/>
            <person name="Phelps K."/>
            <person name="Phillimore B.J."/>
            <person name="Plumb R."/>
            <person name="Rajan J."/>
            <person name="Raymond C."/>
            <person name="Rouse G."/>
            <person name="Saenphimmachak C."/>
            <person name="Sehra H.K."/>
            <person name="Sheridan E."/>
            <person name="Shownkeen R."/>
            <person name="Sims S."/>
            <person name="Skuce C.D."/>
            <person name="Smith M."/>
            <person name="Steward C."/>
            <person name="Subramanian S."/>
            <person name="Sycamore N."/>
            <person name="Tracey A."/>
            <person name="Tromans A."/>
            <person name="Van Helmond Z."/>
            <person name="Wall M."/>
            <person name="Wallis J.M."/>
            <person name="White S."/>
            <person name="Whitehead S.L."/>
            <person name="Wilkinson J.E."/>
            <person name="Willey D.L."/>
            <person name="Williams H."/>
            <person name="Wilming L."/>
            <person name="Wray P.W."/>
            <person name="Wu Z."/>
            <person name="Coulson A."/>
            <person name="Vaudin M."/>
            <person name="Sulston J.E."/>
            <person name="Durbin R.M."/>
            <person name="Hubbard T."/>
            <person name="Wooster R."/>
            <person name="Dunham I."/>
            <person name="Carter N.P."/>
            <person name="McVean G."/>
            <person name="Ross M.T."/>
            <person name="Harrow J."/>
            <person name="Olson M.V."/>
            <person name="Beck S."/>
            <person name="Rogers J."/>
            <person name="Bentley D.R."/>
        </authorList>
    </citation>
    <scope>NUCLEOTIDE SEQUENCE [LARGE SCALE GENOMIC DNA]</scope>
</reference>
<feature type="chain" id="PRO_0000420907" description="Peptidyl-prolyl cis-trans isomerase A-like 4D">
    <location>
        <begin position="1"/>
        <end position="164"/>
    </location>
</feature>
<feature type="domain" description="PPIase cyclophilin-type" evidence="3">
    <location>
        <begin position="7"/>
        <end position="163"/>
    </location>
</feature>
<keyword id="KW-0963">Cytoplasm</keyword>
<keyword id="KW-0413">Isomerase</keyword>
<keyword id="KW-1185">Reference proteome</keyword>
<keyword id="KW-0697">Rotamase</keyword>
<protein>
    <recommendedName>
        <fullName evidence="4">Peptidyl-prolyl cis-trans isomerase A-like 4D</fullName>
        <shortName>PPIase A-like 4D</shortName>
        <ecNumber>5.2.1.8</ecNumber>
    </recommendedName>
</protein>
<name>PAL4D_HUMAN</name>
<sequence>MVNSVVFFEITRDGKPLGRISIKLFADKIPKTAENFRALSTGEKGFRYKGSCFHRIIPGFMCQGGDFTRPNGTGDKSIYGEKFDDENLIRKHTGSGILSMANAGPNTNGSQFFICAAKTEWLDGKHVAFGKVKERVNIVEATEHFGYRNSKTSKKITIADCGQF</sequence>
<accession>F5H284</accession>